<proteinExistence type="inferred from homology"/>
<accession>P0ABX9</accession>
<accession>P06973</accession>
<protein>
    <recommendedName>
        <fullName>Flagellar protein FliL</fullName>
    </recommendedName>
</protein>
<name>FLIL_ECOL6</name>
<sequence length="154" mass="17221">MTDYAISKKSKRSLWIPILVFITLAACASAGYSYWHSHQVAADDKAQQRVVPSPVFYALDTFTVNLGDADRVLYIGITLRLKDEATRSRLSEYLPEVRSRLLLLFSRQDAAVLATEEGKKNLIAEIKTTLSTPLVAGQPKQDVTDVLYTAFILR</sequence>
<organism>
    <name type="scientific">Escherichia coli O6:H1 (strain CFT073 / ATCC 700928 / UPEC)</name>
    <dbReference type="NCBI Taxonomy" id="199310"/>
    <lineage>
        <taxon>Bacteria</taxon>
        <taxon>Pseudomonadati</taxon>
        <taxon>Pseudomonadota</taxon>
        <taxon>Gammaproteobacteria</taxon>
        <taxon>Enterobacterales</taxon>
        <taxon>Enterobacteriaceae</taxon>
        <taxon>Escherichia</taxon>
    </lineage>
</organism>
<reference key="1">
    <citation type="journal article" date="2002" name="Proc. Natl. Acad. Sci. U.S.A.">
        <title>Extensive mosaic structure revealed by the complete genome sequence of uropathogenic Escherichia coli.</title>
        <authorList>
            <person name="Welch R.A."/>
            <person name="Burland V."/>
            <person name="Plunkett G. III"/>
            <person name="Redford P."/>
            <person name="Roesch P."/>
            <person name="Rasko D."/>
            <person name="Buckles E.L."/>
            <person name="Liou S.-R."/>
            <person name="Boutin A."/>
            <person name="Hackett J."/>
            <person name="Stroud D."/>
            <person name="Mayhew G.F."/>
            <person name="Rose D.J."/>
            <person name="Zhou S."/>
            <person name="Schwartz D.C."/>
            <person name="Perna N.T."/>
            <person name="Mobley H.L.T."/>
            <person name="Donnenberg M.S."/>
            <person name="Blattner F.R."/>
        </authorList>
    </citation>
    <scope>NUCLEOTIDE SEQUENCE [LARGE SCALE GENOMIC DNA]</scope>
    <source>
        <strain>CFT073 / ATCC 700928 / UPEC</strain>
    </source>
</reference>
<feature type="chain" id="PRO_0000180916" description="Flagellar protein FliL">
    <location>
        <begin position="1"/>
        <end position="154"/>
    </location>
</feature>
<feature type="transmembrane region" description="Helical" evidence="2">
    <location>
        <begin position="13"/>
        <end position="35"/>
    </location>
</feature>
<evidence type="ECO:0000250" key="1"/>
<evidence type="ECO:0000255" key="2"/>
<evidence type="ECO:0000305" key="3"/>
<keyword id="KW-0997">Cell inner membrane</keyword>
<keyword id="KW-1003">Cell membrane</keyword>
<keyword id="KW-0145">Chemotaxis</keyword>
<keyword id="KW-0283">Flagellar rotation</keyword>
<keyword id="KW-0472">Membrane</keyword>
<keyword id="KW-1185">Reference proteome</keyword>
<keyword id="KW-0812">Transmembrane</keyword>
<keyword id="KW-1133">Transmembrane helix</keyword>
<gene>
    <name type="primary">fliL</name>
    <name type="ordered locus">c2361</name>
</gene>
<comment type="function">
    <text evidence="1">Controls the rotational direction of flagella during chemotaxis.</text>
</comment>
<comment type="subcellular location">
    <subcellularLocation>
        <location evidence="3">Cell inner membrane</location>
        <topology evidence="3">Single-pass membrane protein</topology>
    </subcellularLocation>
</comment>
<comment type="similarity">
    <text evidence="3">Belongs to the FliL family.</text>
</comment>
<dbReference type="EMBL" id="AE014075">
    <property type="protein sequence ID" value="AAN80820.1"/>
    <property type="molecule type" value="Genomic_DNA"/>
</dbReference>
<dbReference type="RefSeq" id="WP_000133106.1">
    <property type="nucleotide sequence ID" value="NZ_CP051263.1"/>
</dbReference>
<dbReference type="SMR" id="P0ABX9"/>
<dbReference type="STRING" id="199310.c2361"/>
<dbReference type="GeneID" id="75172063"/>
<dbReference type="KEGG" id="ecc:c2361"/>
<dbReference type="eggNOG" id="COG1580">
    <property type="taxonomic scope" value="Bacteria"/>
</dbReference>
<dbReference type="HOGENOM" id="CLU_099018_0_1_6"/>
<dbReference type="BioCyc" id="ECOL199310:C2361-MONOMER"/>
<dbReference type="Proteomes" id="UP000001410">
    <property type="component" value="Chromosome"/>
</dbReference>
<dbReference type="GO" id="GO:0009425">
    <property type="term" value="C:bacterial-type flagellum basal body"/>
    <property type="evidence" value="ECO:0007669"/>
    <property type="project" value="InterPro"/>
</dbReference>
<dbReference type="GO" id="GO:0005886">
    <property type="term" value="C:plasma membrane"/>
    <property type="evidence" value="ECO:0007669"/>
    <property type="project" value="UniProtKB-SubCell"/>
</dbReference>
<dbReference type="GO" id="GO:0071978">
    <property type="term" value="P:bacterial-type flagellum-dependent swarming motility"/>
    <property type="evidence" value="ECO:0007669"/>
    <property type="project" value="TreeGrafter"/>
</dbReference>
<dbReference type="GO" id="GO:0006935">
    <property type="term" value="P:chemotaxis"/>
    <property type="evidence" value="ECO:0007669"/>
    <property type="project" value="UniProtKB-KW"/>
</dbReference>
<dbReference type="InterPro" id="IPR005503">
    <property type="entry name" value="FliL"/>
</dbReference>
<dbReference type="NCBIfam" id="NF005435">
    <property type="entry name" value="PRK07021.1"/>
    <property type="match status" value="1"/>
</dbReference>
<dbReference type="PANTHER" id="PTHR35091">
    <property type="entry name" value="FLAGELLAR PROTEIN FLIL"/>
    <property type="match status" value="1"/>
</dbReference>
<dbReference type="PANTHER" id="PTHR35091:SF2">
    <property type="entry name" value="FLAGELLAR PROTEIN FLIL"/>
    <property type="match status" value="1"/>
</dbReference>
<dbReference type="Pfam" id="PF03748">
    <property type="entry name" value="FliL"/>
    <property type="match status" value="1"/>
</dbReference>